<reference key="1">
    <citation type="journal article" date="1995" name="Genomics">
        <title>RNA expression and chromosomal location of the mouse long-chain acyl-CoA dehydrogenase gene.</title>
        <authorList>
            <person name="Hinsdale M.E."/>
            <person name="Farmer S.C."/>
            <person name="Johnson K.R."/>
            <person name="Davisson M.T."/>
            <person name="Hamm D.A."/>
            <person name="Tolwani R.J."/>
            <person name="Wood P.A."/>
        </authorList>
    </citation>
    <scope>NUCLEOTIDE SEQUENCE [MRNA]</scope>
    <source>
        <strain>BALB/cJ</strain>
        <tissue>Liver</tissue>
    </source>
</reference>
<reference key="2">
    <citation type="journal article" date="2005" name="Science">
        <title>The transcriptional landscape of the mammalian genome.</title>
        <authorList>
            <person name="Carninci P."/>
            <person name="Kasukawa T."/>
            <person name="Katayama S."/>
            <person name="Gough J."/>
            <person name="Frith M.C."/>
            <person name="Maeda N."/>
            <person name="Oyama R."/>
            <person name="Ravasi T."/>
            <person name="Lenhard B."/>
            <person name="Wells C."/>
            <person name="Kodzius R."/>
            <person name="Shimokawa K."/>
            <person name="Bajic V.B."/>
            <person name="Brenner S.E."/>
            <person name="Batalov S."/>
            <person name="Forrest A.R."/>
            <person name="Zavolan M."/>
            <person name="Davis M.J."/>
            <person name="Wilming L.G."/>
            <person name="Aidinis V."/>
            <person name="Allen J.E."/>
            <person name="Ambesi-Impiombato A."/>
            <person name="Apweiler R."/>
            <person name="Aturaliya R.N."/>
            <person name="Bailey T.L."/>
            <person name="Bansal M."/>
            <person name="Baxter L."/>
            <person name="Beisel K.W."/>
            <person name="Bersano T."/>
            <person name="Bono H."/>
            <person name="Chalk A.M."/>
            <person name="Chiu K.P."/>
            <person name="Choudhary V."/>
            <person name="Christoffels A."/>
            <person name="Clutterbuck D.R."/>
            <person name="Crowe M.L."/>
            <person name="Dalla E."/>
            <person name="Dalrymple B.P."/>
            <person name="de Bono B."/>
            <person name="Della Gatta G."/>
            <person name="di Bernardo D."/>
            <person name="Down T."/>
            <person name="Engstrom P."/>
            <person name="Fagiolini M."/>
            <person name="Faulkner G."/>
            <person name="Fletcher C.F."/>
            <person name="Fukushima T."/>
            <person name="Furuno M."/>
            <person name="Futaki S."/>
            <person name="Gariboldi M."/>
            <person name="Georgii-Hemming P."/>
            <person name="Gingeras T.R."/>
            <person name="Gojobori T."/>
            <person name="Green R.E."/>
            <person name="Gustincich S."/>
            <person name="Harbers M."/>
            <person name="Hayashi Y."/>
            <person name="Hensch T.K."/>
            <person name="Hirokawa N."/>
            <person name="Hill D."/>
            <person name="Huminiecki L."/>
            <person name="Iacono M."/>
            <person name="Ikeo K."/>
            <person name="Iwama A."/>
            <person name="Ishikawa T."/>
            <person name="Jakt M."/>
            <person name="Kanapin A."/>
            <person name="Katoh M."/>
            <person name="Kawasawa Y."/>
            <person name="Kelso J."/>
            <person name="Kitamura H."/>
            <person name="Kitano H."/>
            <person name="Kollias G."/>
            <person name="Krishnan S.P."/>
            <person name="Kruger A."/>
            <person name="Kummerfeld S.K."/>
            <person name="Kurochkin I.V."/>
            <person name="Lareau L.F."/>
            <person name="Lazarevic D."/>
            <person name="Lipovich L."/>
            <person name="Liu J."/>
            <person name="Liuni S."/>
            <person name="McWilliam S."/>
            <person name="Madan Babu M."/>
            <person name="Madera M."/>
            <person name="Marchionni L."/>
            <person name="Matsuda H."/>
            <person name="Matsuzawa S."/>
            <person name="Miki H."/>
            <person name="Mignone F."/>
            <person name="Miyake S."/>
            <person name="Morris K."/>
            <person name="Mottagui-Tabar S."/>
            <person name="Mulder N."/>
            <person name="Nakano N."/>
            <person name="Nakauchi H."/>
            <person name="Ng P."/>
            <person name="Nilsson R."/>
            <person name="Nishiguchi S."/>
            <person name="Nishikawa S."/>
            <person name="Nori F."/>
            <person name="Ohara O."/>
            <person name="Okazaki Y."/>
            <person name="Orlando V."/>
            <person name="Pang K.C."/>
            <person name="Pavan W.J."/>
            <person name="Pavesi G."/>
            <person name="Pesole G."/>
            <person name="Petrovsky N."/>
            <person name="Piazza S."/>
            <person name="Reed J."/>
            <person name="Reid J.F."/>
            <person name="Ring B.Z."/>
            <person name="Ringwald M."/>
            <person name="Rost B."/>
            <person name="Ruan Y."/>
            <person name="Salzberg S.L."/>
            <person name="Sandelin A."/>
            <person name="Schneider C."/>
            <person name="Schoenbach C."/>
            <person name="Sekiguchi K."/>
            <person name="Semple C.A."/>
            <person name="Seno S."/>
            <person name="Sessa L."/>
            <person name="Sheng Y."/>
            <person name="Shibata Y."/>
            <person name="Shimada H."/>
            <person name="Shimada K."/>
            <person name="Silva D."/>
            <person name="Sinclair B."/>
            <person name="Sperling S."/>
            <person name="Stupka E."/>
            <person name="Sugiura K."/>
            <person name="Sultana R."/>
            <person name="Takenaka Y."/>
            <person name="Taki K."/>
            <person name="Tammoja K."/>
            <person name="Tan S.L."/>
            <person name="Tang S."/>
            <person name="Taylor M.S."/>
            <person name="Tegner J."/>
            <person name="Teichmann S.A."/>
            <person name="Ueda H.R."/>
            <person name="van Nimwegen E."/>
            <person name="Verardo R."/>
            <person name="Wei C.L."/>
            <person name="Yagi K."/>
            <person name="Yamanishi H."/>
            <person name="Zabarovsky E."/>
            <person name="Zhu S."/>
            <person name="Zimmer A."/>
            <person name="Hide W."/>
            <person name="Bult C."/>
            <person name="Grimmond S.M."/>
            <person name="Teasdale R.D."/>
            <person name="Liu E.T."/>
            <person name="Brusic V."/>
            <person name="Quackenbush J."/>
            <person name="Wahlestedt C."/>
            <person name="Mattick J.S."/>
            <person name="Hume D.A."/>
            <person name="Kai C."/>
            <person name="Sasaki D."/>
            <person name="Tomaru Y."/>
            <person name="Fukuda S."/>
            <person name="Kanamori-Katayama M."/>
            <person name="Suzuki M."/>
            <person name="Aoki J."/>
            <person name="Arakawa T."/>
            <person name="Iida J."/>
            <person name="Imamura K."/>
            <person name="Itoh M."/>
            <person name="Kato T."/>
            <person name="Kawaji H."/>
            <person name="Kawagashira N."/>
            <person name="Kawashima T."/>
            <person name="Kojima M."/>
            <person name="Kondo S."/>
            <person name="Konno H."/>
            <person name="Nakano K."/>
            <person name="Ninomiya N."/>
            <person name="Nishio T."/>
            <person name="Okada M."/>
            <person name="Plessy C."/>
            <person name="Shibata K."/>
            <person name="Shiraki T."/>
            <person name="Suzuki S."/>
            <person name="Tagami M."/>
            <person name="Waki K."/>
            <person name="Watahiki A."/>
            <person name="Okamura-Oho Y."/>
            <person name="Suzuki H."/>
            <person name="Kawai J."/>
            <person name="Hayashizaki Y."/>
        </authorList>
    </citation>
    <scope>NUCLEOTIDE SEQUENCE [LARGE SCALE MRNA]</scope>
    <source>
        <strain>C57BL/6J</strain>
        <tissue>Cerebellum</tissue>
    </source>
</reference>
<reference key="3">
    <citation type="journal article" date="2009" name="PLoS Biol.">
        <title>Lineage-specific biology revealed by a finished genome assembly of the mouse.</title>
        <authorList>
            <person name="Church D.M."/>
            <person name="Goodstadt L."/>
            <person name="Hillier L.W."/>
            <person name="Zody M.C."/>
            <person name="Goldstein S."/>
            <person name="She X."/>
            <person name="Bult C.J."/>
            <person name="Agarwala R."/>
            <person name="Cherry J.L."/>
            <person name="DiCuccio M."/>
            <person name="Hlavina W."/>
            <person name="Kapustin Y."/>
            <person name="Meric P."/>
            <person name="Maglott D."/>
            <person name="Birtle Z."/>
            <person name="Marques A.C."/>
            <person name="Graves T."/>
            <person name="Zhou S."/>
            <person name="Teague B."/>
            <person name="Potamousis K."/>
            <person name="Churas C."/>
            <person name="Place M."/>
            <person name="Herschleb J."/>
            <person name="Runnheim R."/>
            <person name="Forrest D."/>
            <person name="Amos-Landgraf J."/>
            <person name="Schwartz D.C."/>
            <person name="Cheng Z."/>
            <person name="Lindblad-Toh K."/>
            <person name="Eichler E.E."/>
            <person name="Ponting C.P."/>
        </authorList>
    </citation>
    <scope>NUCLEOTIDE SEQUENCE [LARGE SCALE GENOMIC DNA]</scope>
    <source>
        <strain>C57BL/6J</strain>
    </source>
</reference>
<reference key="4">
    <citation type="journal article" date="2004" name="Genome Res.">
        <title>The status, quality, and expansion of the NIH full-length cDNA project: the Mammalian Gene Collection (MGC).</title>
        <authorList>
            <consortium name="The MGC Project Team"/>
        </authorList>
    </citation>
    <scope>NUCLEOTIDE SEQUENCE [LARGE SCALE MRNA]</scope>
    <source>
        <tissue>Kidney</tissue>
    </source>
</reference>
<reference key="5">
    <citation type="journal article" date="1998" name="Mamm. Genome">
        <title>Structural characterization of the mouse long-chain acyl-CoA dehydrogenase gene and 5' regulatory region.</title>
        <authorList>
            <person name="Kurtz D.M."/>
            <person name="Tolwani R.J."/>
            <person name="Wood P.A."/>
        </authorList>
    </citation>
    <scope>NUCLEOTIDE SEQUENCE [GENOMIC DNA] OF 1-201</scope>
    <source>
        <strain>129/Sv</strain>
    </source>
</reference>
<reference key="6">
    <citation type="journal article" date="1998" name="Proc. Natl. Acad. Sci. U.S.A.">
        <title>Targeted disruption of mouse long-chain acyl-CoA dehydrogenase gene reveals crucial roles for fatty acid oxidation.</title>
        <authorList>
            <person name="Kurtz D.M."/>
            <person name="Rinaldo P."/>
            <person name="Rhead W.J."/>
            <person name="Tian L."/>
            <person name="Millington D.S."/>
            <person name="Vockley J."/>
            <person name="Hamm D.A."/>
            <person name="Brix A.E."/>
            <person name="Lindsey J.R."/>
            <person name="Pinkert C.A."/>
            <person name="O'Brien W.E."/>
            <person name="Wood P.A."/>
        </authorList>
    </citation>
    <scope>FUNCTION</scope>
    <scope>CATALYTIC ACTIVITY</scope>
    <scope>PATHWAY</scope>
    <scope>TISSUE SPECIFICITY</scope>
    <scope>DISRUPTION PHENOTYPE</scope>
</reference>
<reference key="7">
    <citation type="journal article" date="2010" name="Cell">
        <title>A tissue-specific atlas of mouse protein phosphorylation and expression.</title>
        <authorList>
            <person name="Huttlin E.L."/>
            <person name="Jedrychowski M.P."/>
            <person name="Elias J.E."/>
            <person name="Goswami T."/>
            <person name="Rad R."/>
            <person name="Beausoleil S.A."/>
            <person name="Villen J."/>
            <person name="Haas W."/>
            <person name="Sowa M.E."/>
            <person name="Gygi S.P."/>
        </authorList>
    </citation>
    <scope>PHOSPHORYLATION [LARGE SCALE ANALYSIS] AT SER-55; SER-191 AND SER-362</scope>
    <scope>IDENTIFICATION BY MASS SPECTROMETRY [LARGE SCALE ANALYSIS]</scope>
    <source>
        <tissue>Brain</tissue>
        <tissue>Brown adipose tissue</tissue>
        <tissue>Heart</tissue>
        <tissue>Kidney</tissue>
        <tissue>Liver</tissue>
        <tissue>Lung</tissue>
        <tissue>Pancreas</tissue>
        <tissue>Spleen</tissue>
        <tissue>Testis</tissue>
    </source>
</reference>
<reference key="8">
    <citation type="journal article" date="2013" name="J. Biol. Chem.">
        <title>SIRT3 regulates long-chain acyl-coA dehydrogenase by deacetylating conserved lysines near the active site.</title>
        <authorList>
            <person name="Bharathi S.S."/>
            <person name="Zhang Y."/>
            <person name="Mohsen A.W."/>
            <person name="Uppala R."/>
            <person name="Balasubramani M."/>
            <person name="Schreiber E."/>
            <person name="Uechi G."/>
            <person name="Beck M.E."/>
            <person name="Rardin M.J."/>
            <person name="Vockley J."/>
            <person name="Verdin E."/>
            <person name="Gibson B.W."/>
            <person name="Hirschey M.D."/>
            <person name="Goetzman E.S."/>
        </authorList>
    </citation>
    <scope>ACETYLATION AT LYS-42; LYS-318 AND LYS-322</scope>
    <scope>DEACETYLATION BY SIRT3</scope>
    <scope>MUTAGENESIS OF LYS-42; LYS-318 AND LYS-322</scope>
</reference>
<reference key="9">
    <citation type="journal article" date="2013" name="Mol. Cell">
        <title>SIRT5-mediated lysine desuccinylation impacts diverse metabolic pathways.</title>
        <authorList>
            <person name="Park J."/>
            <person name="Chen Y."/>
            <person name="Tishkoff D.X."/>
            <person name="Peng C."/>
            <person name="Tan M."/>
            <person name="Dai L."/>
            <person name="Xie Z."/>
            <person name="Zhang Y."/>
            <person name="Zwaans B.M."/>
            <person name="Skinner M.E."/>
            <person name="Lombard D.B."/>
            <person name="Zhao Y."/>
        </authorList>
    </citation>
    <scope>SUCCINYLATION [LARGE SCALE ANALYSIS] AT LYS-66; LYS-81; LYS-165; LYS-240; LYS-254; LYS-279 AND LYS-322</scope>
    <scope>IDENTIFICATION BY MASS SPECTROMETRY [LARGE SCALE ANALYSIS]</scope>
    <source>
        <tissue>Liver</tissue>
    </source>
</reference>
<reference key="10">
    <citation type="journal article" date="2013" name="Proc. Natl. Acad. Sci. U.S.A.">
        <title>Label-free quantitative proteomics of the lysine acetylome in mitochondria identifies substrates of SIRT3 in metabolic pathways.</title>
        <authorList>
            <person name="Rardin M.J."/>
            <person name="Newman J.C."/>
            <person name="Held J.M."/>
            <person name="Cusack M.P."/>
            <person name="Sorensen D.J."/>
            <person name="Li B."/>
            <person name="Schilling B."/>
            <person name="Mooney S.D."/>
            <person name="Kahn C.R."/>
            <person name="Verdin E."/>
            <person name="Gibson B.W."/>
        </authorList>
    </citation>
    <scope>ACETYLATION [LARGE SCALE ANALYSIS] AT LYS-42; LYS-66; LYS-81; LYS-92; LYS-95; LYS-254; LYS-279; LYS-322 AND LYS-358</scope>
    <scope>IDENTIFICATION BY MASS SPECTROMETRY [LARGE SCALE ANALYSIS]</scope>
    <source>
        <tissue>Liver</tissue>
    </source>
</reference>
<dbReference type="EC" id="1.3.8.8" evidence="6"/>
<dbReference type="EMBL" id="U21489">
    <property type="protein sequence ID" value="AAC52329.1"/>
    <property type="molecule type" value="mRNA"/>
</dbReference>
<dbReference type="EMBL" id="AK005140">
    <property type="protein sequence ID" value="BAB23838.1"/>
    <property type="molecule type" value="mRNA"/>
</dbReference>
<dbReference type="EMBL" id="AK018319">
    <property type="protein sequence ID" value="BAB31161.1"/>
    <property type="molecule type" value="mRNA"/>
</dbReference>
<dbReference type="EMBL" id="CU302198">
    <property type="status" value="NOT_ANNOTATED_CDS"/>
    <property type="molecule type" value="Genomic_DNA"/>
</dbReference>
<dbReference type="EMBL" id="BC027412">
    <property type="protein sequence ID" value="AAH27412.1"/>
    <property type="molecule type" value="mRNA"/>
</dbReference>
<dbReference type="EMBL" id="AH006178">
    <property type="protein sequence ID" value="AAC23587.1"/>
    <property type="molecule type" value="Genomic_DNA"/>
</dbReference>
<dbReference type="CCDS" id="CCDS15023.1"/>
<dbReference type="RefSeq" id="NP_031407.2">
    <property type="nucleotide sequence ID" value="NM_007381.4"/>
</dbReference>
<dbReference type="SMR" id="P51174"/>
<dbReference type="BioGRID" id="197911">
    <property type="interactions" value="32"/>
</dbReference>
<dbReference type="FunCoup" id="P51174">
    <property type="interactions" value="314"/>
</dbReference>
<dbReference type="IntAct" id="P51174">
    <property type="interactions" value="6"/>
</dbReference>
<dbReference type="MINT" id="P51174"/>
<dbReference type="STRING" id="10090.ENSMUSP00000027153"/>
<dbReference type="SwissLipids" id="SLP:000000934"/>
<dbReference type="GlyGen" id="P51174">
    <property type="glycosylation" value="1 site, 1 O-linked glycan (1 site)"/>
</dbReference>
<dbReference type="iPTMnet" id="P51174"/>
<dbReference type="PhosphoSitePlus" id="P51174"/>
<dbReference type="SwissPalm" id="P51174"/>
<dbReference type="jPOST" id="P51174"/>
<dbReference type="PaxDb" id="10090-ENSMUSP00000027153"/>
<dbReference type="PeptideAtlas" id="P51174"/>
<dbReference type="ProteomicsDB" id="285831"/>
<dbReference type="Pumba" id="P51174"/>
<dbReference type="DNASU" id="11363"/>
<dbReference type="GeneID" id="11363"/>
<dbReference type="KEGG" id="mmu:11363"/>
<dbReference type="UCSC" id="uc007bir.2">
    <property type="organism name" value="mouse"/>
</dbReference>
<dbReference type="AGR" id="MGI:87866"/>
<dbReference type="CTD" id="33"/>
<dbReference type="MGI" id="MGI:87866">
    <property type="gene designation" value="Acadl"/>
</dbReference>
<dbReference type="eggNOG" id="KOG0141">
    <property type="taxonomic scope" value="Eukaryota"/>
</dbReference>
<dbReference type="InParanoid" id="P51174"/>
<dbReference type="OrthoDB" id="9988775at2759"/>
<dbReference type="PhylomeDB" id="P51174"/>
<dbReference type="TreeFam" id="TF105054"/>
<dbReference type="BRENDA" id="1.3.8.8">
    <property type="organism ID" value="3474"/>
</dbReference>
<dbReference type="Reactome" id="R-MMU-77285">
    <property type="pathway name" value="Beta oxidation of myristoyl-CoA to lauroyl-CoA"/>
</dbReference>
<dbReference type="Reactome" id="R-MMU-77310">
    <property type="pathway name" value="Beta oxidation of lauroyl-CoA to decanoyl-CoA-CoA"/>
</dbReference>
<dbReference type="UniPathway" id="UPA00660"/>
<dbReference type="BioGRID-ORCS" id="11363">
    <property type="hits" value="1 hit in 79 CRISPR screens"/>
</dbReference>
<dbReference type="ChiTaRS" id="Acadl">
    <property type="organism name" value="mouse"/>
</dbReference>
<dbReference type="PRO" id="PR:P51174"/>
<dbReference type="Proteomes" id="UP000000589">
    <property type="component" value="Unplaced"/>
</dbReference>
<dbReference type="RNAct" id="P51174">
    <property type="molecule type" value="protein"/>
</dbReference>
<dbReference type="GO" id="GO:0005759">
    <property type="term" value="C:mitochondrial matrix"/>
    <property type="evidence" value="ECO:0007669"/>
    <property type="project" value="UniProtKB-SubCell"/>
</dbReference>
<dbReference type="GO" id="GO:0005739">
    <property type="term" value="C:mitochondrion"/>
    <property type="evidence" value="ECO:0000314"/>
    <property type="project" value="MGI"/>
</dbReference>
<dbReference type="GO" id="GO:0050660">
    <property type="term" value="F:flavin adenine dinucleotide binding"/>
    <property type="evidence" value="ECO:0007669"/>
    <property type="project" value="InterPro"/>
</dbReference>
<dbReference type="GO" id="GO:0004466">
    <property type="term" value="F:long-chain fatty acyl-CoA dehydrogenase activity"/>
    <property type="evidence" value="ECO:0000314"/>
    <property type="project" value="BHF-UCL"/>
</dbReference>
<dbReference type="GO" id="GO:0042413">
    <property type="term" value="P:carnitine catabolic process"/>
    <property type="evidence" value="ECO:0000315"/>
    <property type="project" value="BHF-UCL"/>
</dbReference>
<dbReference type="GO" id="GO:0019254">
    <property type="term" value="P:carnitine metabolic process, CoA-linked"/>
    <property type="evidence" value="ECO:0000315"/>
    <property type="project" value="BHF-UCL"/>
</dbReference>
<dbReference type="GO" id="GO:0033539">
    <property type="term" value="P:fatty acid beta-oxidation using acyl-CoA dehydrogenase"/>
    <property type="evidence" value="ECO:0000314"/>
    <property type="project" value="BHF-UCL"/>
</dbReference>
<dbReference type="GO" id="GO:0009062">
    <property type="term" value="P:fatty acid catabolic process"/>
    <property type="evidence" value="ECO:0000315"/>
    <property type="project" value="MGI"/>
</dbReference>
<dbReference type="GO" id="GO:0016042">
    <property type="term" value="P:lipid catabolic process"/>
    <property type="evidence" value="ECO:0000315"/>
    <property type="project" value="BHF-UCL"/>
</dbReference>
<dbReference type="GO" id="GO:0042758">
    <property type="term" value="P:long-chain fatty acid catabolic process"/>
    <property type="evidence" value="ECO:0007669"/>
    <property type="project" value="InterPro"/>
</dbReference>
<dbReference type="GO" id="GO:0045717">
    <property type="term" value="P:negative regulation of fatty acid biosynthetic process"/>
    <property type="evidence" value="ECO:0000315"/>
    <property type="project" value="BHF-UCL"/>
</dbReference>
<dbReference type="GO" id="GO:0046322">
    <property type="term" value="P:negative regulation of fatty acid oxidation"/>
    <property type="evidence" value="ECO:0000315"/>
    <property type="project" value="BHF-UCL"/>
</dbReference>
<dbReference type="GO" id="GO:0120162">
    <property type="term" value="P:positive regulation of cold-induced thermogenesis"/>
    <property type="evidence" value="ECO:0000315"/>
    <property type="project" value="YuBioLab"/>
</dbReference>
<dbReference type="GO" id="GO:0090181">
    <property type="term" value="P:regulation of cholesterol metabolic process"/>
    <property type="evidence" value="ECO:0000315"/>
    <property type="project" value="BHF-UCL"/>
</dbReference>
<dbReference type="GO" id="GO:0009409">
    <property type="term" value="P:response to cold"/>
    <property type="evidence" value="ECO:0000315"/>
    <property type="project" value="MGI"/>
</dbReference>
<dbReference type="GO" id="GO:0001659">
    <property type="term" value="P:temperature homeostasis"/>
    <property type="evidence" value="ECO:0000315"/>
    <property type="project" value="BHF-UCL"/>
</dbReference>
<dbReference type="CDD" id="cd01160">
    <property type="entry name" value="LCAD"/>
    <property type="match status" value="1"/>
</dbReference>
<dbReference type="FunFam" id="2.40.110.10:FF:000002">
    <property type="entry name" value="Acyl-CoA dehydrogenase fadE12"/>
    <property type="match status" value="1"/>
</dbReference>
<dbReference type="FunFam" id="1.20.140.10:FF:000020">
    <property type="entry name" value="Long-chain specific acyl-CoA dehydrogenase, mitochondrial"/>
    <property type="match status" value="1"/>
</dbReference>
<dbReference type="FunFam" id="1.10.540.10:FF:000017">
    <property type="entry name" value="long-chain specific acyl-CoA dehydrogenase, mitochondrial"/>
    <property type="match status" value="1"/>
</dbReference>
<dbReference type="Gene3D" id="1.10.540.10">
    <property type="entry name" value="Acyl-CoA dehydrogenase/oxidase, N-terminal domain"/>
    <property type="match status" value="1"/>
</dbReference>
<dbReference type="Gene3D" id="2.40.110.10">
    <property type="entry name" value="Butyryl-CoA Dehydrogenase, subunit A, domain 2"/>
    <property type="match status" value="1"/>
</dbReference>
<dbReference type="Gene3D" id="1.20.140.10">
    <property type="entry name" value="Butyryl-CoA Dehydrogenase, subunit A, domain 3"/>
    <property type="match status" value="1"/>
</dbReference>
<dbReference type="InterPro" id="IPR050741">
    <property type="entry name" value="Acyl-CoA_dehydrogenase"/>
</dbReference>
<dbReference type="InterPro" id="IPR006089">
    <property type="entry name" value="Acyl-CoA_DH_CS"/>
</dbReference>
<dbReference type="InterPro" id="IPR006091">
    <property type="entry name" value="Acyl-CoA_Oxase/DH_mid-dom"/>
</dbReference>
<dbReference type="InterPro" id="IPR046373">
    <property type="entry name" value="Acyl-CoA_Oxase/DH_mid-dom_sf"/>
</dbReference>
<dbReference type="InterPro" id="IPR036250">
    <property type="entry name" value="AcylCo_DH-like_C"/>
</dbReference>
<dbReference type="InterPro" id="IPR009075">
    <property type="entry name" value="AcylCo_DH/oxidase_C"/>
</dbReference>
<dbReference type="InterPro" id="IPR013786">
    <property type="entry name" value="AcylCoA_DH/ox_N"/>
</dbReference>
<dbReference type="InterPro" id="IPR037069">
    <property type="entry name" value="AcylCoA_DH/ox_N_sf"/>
</dbReference>
<dbReference type="InterPro" id="IPR009100">
    <property type="entry name" value="AcylCoA_DH/oxidase_NM_dom_sf"/>
</dbReference>
<dbReference type="InterPro" id="IPR034179">
    <property type="entry name" value="LCAD"/>
</dbReference>
<dbReference type="PANTHER" id="PTHR48083:SF20">
    <property type="entry name" value="LONG-CHAIN SPECIFIC ACYL-COA DEHYDROGENASE, MITOCHONDRIAL"/>
    <property type="match status" value="1"/>
</dbReference>
<dbReference type="PANTHER" id="PTHR48083">
    <property type="entry name" value="MEDIUM-CHAIN SPECIFIC ACYL-COA DEHYDROGENASE, MITOCHONDRIAL-RELATED"/>
    <property type="match status" value="1"/>
</dbReference>
<dbReference type="Pfam" id="PF00441">
    <property type="entry name" value="Acyl-CoA_dh_1"/>
    <property type="match status" value="1"/>
</dbReference>
<dbReference type="Pfam" id="PF02770">
    <property type="entry name" value="Acyl-CoA_dh_M"/>
    <property type="match status" value="1"/>
</dbReference>
<dbReference type="Pfam" id="PF02771">
    <property type="entry name" value="Acyl-CoA_dh_N"/>
    <property type="match status" value="1"/>
</dbReference>
<dbReference type="SUPFAM" id="SSF47203">
    <property type="entry name" value="Acyl-CoA dehydrogenase C-terminal domain-like"/>
    <property type="match status" value="1"/>
</dbReference>
<dbReference type="SUPFAM" id="SSF56645">
    <property type="entry name" value="Acyl-CoA dehydrogenase NM domain-like"/>
    <property type="match status" value="1"/>
</dbReference>
<dbReference type="PROSITE" id="PS00072">
    <property type="entry name" value="ACYL_COA_DH_1"/>
    <property type="match status" value="1"/>
</dbReference>
<dbReference type="PROSITE" id="PS00073">
    <property type="entry name" value="ACYL_COA_DH_2"/>
    <property type="match status" value="1"/>
</dbReference>
<keyword id="KW-0007">Acetylation</keyword>
<keyword id="KW-0274">FAD</keyword>
<keyword id="KW-0276">Fatty acid metabolism</keyword>
<keyword id="KW-0285">Flavoprotein</keyword>
<keyword id="KW-0443">Lipid metabolism</keyword>
<keyword id="KW-0496">Mitochondrion</keyword>
<keyword id="KW-0560">Oxidoreductase</keyword>
<keyword id="KW-0597">Phosphoprotein</keyword>
<keyword id="KW-1185">Reference proteome</keyword>
<keyword id="KW-0809">Transit peptide</keyword>
<gene>
    <name evidence="8" type="primary">Acadl</name>
</gene>
<comment type="function">
    <text evidence="1 6">Long-chain specific acyl-CoA dehydrogenase is one of the acyl-CoA dehydrogenases that catalyze the first step of mitochondrial fatty acid beta-oxidation, an aerobic process breaking down fatty acids into acetyl-CoA and allowing the production of energy from fats. The first step of fatty acid beta-oxidation consists in the removal of one hydrogen from C-2 and C-3 of the straight-chain fatty acyl-CoA thioester, resulting in the formation of trans-2-enoyl-CoA (By similarity). Among the different mitochondrial acyl-CoA dehydrogenases, long-chain specific acyl-CoA dehydrogenase can act on saturated and unsaturated acyl-CoAs with 6 to 24 carbons with a preference for 8 to 18 carbons long primary chains (PubMed:9861014).</text>
</comment>
<comment type="catalytic activity">
    <reaction evidence="6">
        <text>a long-chain 2,3-saturated fatty acyl-CoA + oxidized [electron-transfer flavoprotein] + H(+) = a long-chain (2E)-enoyl-CoA + reduced [electron-transfer flavoprotein]</text>
        <dbReference type="Rhea" id="RHEA:17721"/>
        <dbReference type="Rhea" id="RHEA-COMP:10685"/>
        <dbReference type="Rhea" id="RHEA-COMP:10686"/>
        <dbReference type="ChEBI" id="CHEBI:15378"/>
        <dbReference type="ChEBI" id="CHEBI:57692"/>
        <dbReference type="ChEBI" id="CHEBI:58307"/>
        <dbReference type="ChEBI" id="CHEBI:83721"/>
        <dbReference type="ChEBI" id="CHEBI:83727"/>
        <dbReference type="EC" id="1.3.8.8"/>
    </reaction>
    <physiologicalReaction direction="left-to-right" evidence="6">
        <dbReference type="Rhea" id="RHEA:17722"/>
    </physiologicalReaction>
</comment>
<comment type="catalytic activity">
    <reaction evidence="6">
        <text>oxidized [electron-transfer flavoprotein] + hexadecanoyl-CoA + H(+) = (2E)-hexadecenoyl-CoA + reduced [electron-transfer flavoprotein]</text>
        <dbReference type="Rhea" id="RHEA:43448"/>
        <dbReference type="Rhea" id="RHEA-COMP:10685"/>
        <dbReference type="Rhea" id="RHEA-COMP:10686"/>
        <dbReference type="ChEBI" id="CHEBI:15378"/>
        <dbReference type="ChEBI" id="CHEBI:57379"/>
        <dbReference type="ChEBI" id="CHEBI:57692"/>
        <dbReference type="ChEBI" id="CHEBI:58307"/>
        <dbReference type="ChEBI" id="CHEBI:61526"/>
    </reaction>
    <physiologicalReaction direction="left-to-right" evidence="6">
        <dbReference type="Rhea" id="RHEA:43449"/>
    </physiologicalReaction>
</comment>
<comment type="catalytic activity">
    <reaction evidence="3">
        <text>hexanoyl-CoA + oxidized [electron-transfer flavoprotein] + H(+) = (2E)-hexenoyl-CoA + reduced [electron-transfer flavoprotein]</text>
        <dbReference type="Rhea" id="RHEA:43464"/>
        <dbReference type="Rhea" id="RHEA-COMP:10685"/>
        <dbReference type="Rhea" id="RHEA-COMP:10686"/>
        <dbReference type="ChEBI" id="CHEBI:15378"/>
        <dbReference type="ChEBI" id="CHEBI:57692"/>
        <dbReference type="ChEBI" id="CHEBI:58307"/>
        <dbReference type="ChEBI" id="CHEBI:62077"/>
        <dbReference type="ChEBI" id="CHEBI:62620"/>
    </reaction>
    <physiologicalReaction direction="left-to-right" evidence="3">
        <dbReference type="Rhea" id="RHEA:43465"/>
    </physiologicalReaction>
</comment>
<comment type="catalytic activity">
    <reaction evidence="3">
        <text>octanoyl-CoA + oxidized [electron-transfer flavoprotein] + H(+) = (2E)-octenoyl-CoA + reduced [electron-transfer flavoprotein]</text>
        <dbReference type="Rhea" id="RHEA:48180"/>
        <dbReference type="Rhea" id="RHEA-COMP:10685"/>
        <dbReference type="Rhea" id="RHEA-COMP:10686"/>
        <dbReference type="ChEBI" id="CHEBI:15378"/>
        <dbReference type="ChEBI" id="CHEBI:57386"/>
        <dbReference type="ChEBI" id="CHEBI:57692"/>
        <dbReference type="ChEBI" id="CHEBI:58307"/>
        <dbReference type="ChEBI" id="CHEBI:62242"/>
    </reaction>
    <physiologicalReaction direction="left-to-right" evidence="3">
        <dbReference type="Rhea" id="RHEA:48181"/>
    </physiologicalReaction>
</comment>
<comment type="catalytic activity">
    <reaction evidence="3">
        <text>decanoyl-CoA + oxidized [electron-transfer flavoprotein] + H(+) = (2E)-decenoyl-CoA + reduced [electron-transfer flavoprotein]</text>
        <dbReference type="Rhea" id="RHEA:48176"/>
        <dbReference type="Rhea" id="RHEA-COMP:10685"/>
        <dbReference type="Rhea" id="RHEA-COMP:10686"/>
        <dbReference type="ChEBI" id="CHEBI:15378"/>
        <dbReference type="ChEBI" id="CHEBI:57692"/>
        <dbReference type="ChEBI" id="CHEBI:58307"/>
        <dbReference type="ChEBI" id="CHEBI:61406"/>
        <dbReference type="ChEBI" id="CHEBI:61430"/>
    </reaction>
    <physiologicalReaction direction="left-to-right" evidence="3">
        <dbReference type="Rhea" id="RHEA:48177"/>
    </physiologicalReaction>
</comment>
<comment type="catalytic activity">
    <reaction evidence="3">
        <text>dodecanoyl-CoA + oxidized [electron-transfer flavoprotein] + H(+) = (2E)-dodecenoyl-CoA + reduced [electron-transfer flavoprotein]</text>
        <dbReference type="Rhea" id="RHEA:47296"/>
        <dbReference type="Rhea" id="RHEA-COMP:10685"/>
        <dbReference type="Rhea" id="RHEA-COMP:10686"/>
        <dbReference type="ChEBI" id="CHEBI:15378"/>
        <dbReference type="ChEBI" id="CHEBI:57330"/>
        <dbReference type="ChEBI" id="CHEBI:57375"/>
        <dbReference type="ChEBI" id="CHEBI:57692"/>
        <dbReference type="ChEBI" id="CHEBI:58307"/>
    </reaction>
    <physiologicalReaction direction="left-to-right" evidence="3">
        <dbReference type="Rhea" id="RHEA:47297"/>
    </physiologicalReaction>
</comment>
<comment type="catalytic activity">
    <reaction evidence="3">
        <text>tetradecanoyl-CoA + oxidized [electron-transfer flavoprotein] + H(+) = (2E)-tetradecenoyl-CoA + reduced [electron-transfer flavoprotein]</text>
        <dbReference type="Rhea" id="RHEA:47316"/>
        <dbReference type="Rhea" id="RHEA-COMP:10685"/>
        <dbReference type="Rhea" id="RHEA-COMP:10686"/>
        <dbReference type="ChEBI" id="CHEBI:15378"/>
        <dbReference type="ChEBI" id="CHEBI:57385"/>
        <dbReference type="ChEBI" id="CHEBI:57692"/>
        <dbReference type="ChEBI" id="CHEBI:58307"/>
        <dbReference type="ChEBI" id="CHEBI:61405"/>
    </reaction>
    <physiologicalReaction direction="left-to-right" evidence="3">
        <dbReference type="Rhea" id="RHEA:47317"/>
    </physiologicalReaction>
</comment>
<comment type="catalytic activity">
    <reaction evidence="3">
        <text>octadecanoyl-CoA + oxidized [electron-transfer flavoprotein] + H(+) = (2E)-octadecenoyl-CoA + reduced [electron-transfer flavoprotein]</text>
        <dbReference type="Rhea" id="RHEA:47240"/>
        <dbReference type="Rhea" id="RHEA-COMP:10685"/>
        <dbReference type="Rhea" id="RHEA-COMP:10686"/>
        <dbReference type="ChEBI" id="CHEBI:15378"/>
        <dbReference type="ChEBI" id="CHEBI:57394"/>
        <dbReference type="ChEBI" id="CHEBI:57692"/>
        <dbReference type="ChEBI" id="CHEBI:58307"/>
        <dbReference type="ChEBI" id="CHEBI:71412"/>
    </reaction>
    <physiologicalReaction direction="left-to-right" evidence="3">
        <dbReference type="Rhea" id="RHEA:47241"/>
    </physiologicalReaction>
</comment>
<comment type="catalytic activity">
    <reaction evidence="3">
        <text>eicosanoyl-CoA + oxidized [electron-transfer flavoprotein] + H(+) = (2E)-eicosenoyl-CoA + reduced [electron-transfer flavoprotein]</text>
        <dbReference type="Rhea" id="RHEA:47236"/>
        <dbReference type="Rhea" id="RHEA-COMP:10685"/>
        <dbReference type="Rhea" id="RHEA-COMP:10686"/>
        <dbReference type="ChEBI" id="CHEBI:15378"/>
        <dbReference type="ChEBI" id="CHEBI:57380"/>
        <dbReference type="ChEBI" id="CHEBI:57692"/>
        <dbReference type="ChEBI" id="CHEBI:58307"/>
        <dbReference type="ChEBI" id="CHEBI:74691"/>
    </reaction>
    <physiologicalReaction direction="left-to-right" evidence="3">
        <dbReference type="Rhea" id="RHEA:47237"/>
    </physiologicalReaction>
</comment>
<comment type="catalytic activity">
    <reaction evidence="3">
        <text>docosanoyl-CoA + oxidized [electron-transfer flavoprotein] + H(+) = (2E)-docosenoyl-CoA + reduced [electron-transfer flavoprotein]</text>
        <dbReference type="Rhea" id="RHEA:47228"/>
        <dbReference type="Rhea" id="RHEA-COMP:10685"/>
        <dbReference type="Rhea" id="RHEA-COMP:10686"/>
        <dbReference type="ChEBI" id="CHEBI:15378"/>
        <dbReference type="ChEBI" id="CHEBI:57692"/>
        <dbReference type="ChEBI" id="CHEBI:58307"/>
        <dbReference type="ChEBI" id="CHEBI:65059"/>
        <dbReference type="ChEBI" id="CHEBI:74692"/>
    </reaction>
    <physiologicalReaction direction="left-to-right" evidence="3">
        <dbReference type="Rhea" id="RHEA:47229"/>
    </physiologicalReaction>
</comment>
<comment type="catalytic activity">
    <reaction evidence="3">
        <text>tetracosanoyl-CoA + oxidized [electron-transfer flavoprotein] + H(+) = (2E)-tetracosenoyl-CoA + reduced [electron-transfer flavoprotein]</text>
        <dbReference type="Rhea" id="RHEA:47232"/>
        <dbReference type="Rhea" id="RHEA-COMP:10685"/>
        <dbReference type="Rhea" id="RHEA-COMP:10686"/>
        <dbReference type="ChEBI" id="CHEBI:15378"/>
        <dbReference type="ChEBI" id="CHEBI:57692"/>
        <dbReference type="ChEBI" id="CHEBI:58307"/>
        <dbReference type="ChEBI" id="CHEBI:65052"/>
        <dbReference type="ChEBI" id="CHEBI:74693"/>
    </reaction>
    <physiologicalReaction direction="left-to-right" evidence="3">
        <dbReference type="Rhea" id="RHEA:47233"/>
    </physiologicalReaction>
</comment>
<comment type="catalytic activity">
    <reaction evidence="1">
        <text>(5E)-tetradecenoyl-CoA + oxidized [electron-transfer flavoprotein] + H(+) = (2E,5E)-tetradecadienoyl-CoA + reduced [electron-transfer flavoprotein]</text>
        <dbReference type="Rhea" id="RHEA:49828"/>
        <dbReference type="Rhea" id="RHEA-COMP:10685"/>
        <dbReference type="Rhea" id="RHEA-COMP:10686"/>
        <dbReference type="ChEBI" id="CHEBI:15378"/>
        <dbReference type="ChEBI" id="CHEBI:57692"/>
        <dbReference type="ChEBI" id="CHEBI:58307"/>
        <dbReference type="ChEBI" id="CHEBI:131943"/>
        <dbReference type="ChEBI" id="CHEBI:131944"/>
    </reaction>
    <physiologicalReaction direction="left-to-right" evidence="1">
        <dbReference type="Rhea" id="RHEA:49829"/>
    </physiologicalReaction>
</comment>
<comment type="catalytic activity">
    <reaction evidence="1">
        <text>(5Z)-tetradecenoyl-CoA + oxidized [electron-transfer flavoprotein] + H(+) = (2E,5Z)-tetradecadienoyl-CoA + reduced [electron-transfer flavoprotein]</text>
        <dbReference type="Rhea" id="RHEA:47448"/>
        <dbReference type="Rhea" id="RHEA-COMP:10685"/>
        <dbReference type="Rhea" id="RHEA-COMP:10686"/>
        <dbReference type="ChEBI" id="CHEBI:15378"/>
        <dbReference type="ChEBI" id="CHEBI:57692"/>
        <dbReference type="ChEBI" id="CHEBI:58307"/>
        <dbReference type="ChEBI" id="CHEBI:84650"/>
        <dbReference type="ChEBI" id="CHEBI:87701"/>
    </reaction>
    <physiologicalReaction direction="left-to-right" evidence="1">
        <dbReference type="Rhea" id="RHEA:47449"/>
    </physiologicalReaction>
</comment>
<comment type="catalytic activity">
    <reaction evidence="1">
        <text>oxidized [electron-transfer flavoprotein] + (9Z)-octadecenoyl-CoA + H(+) = (2E,9Z)-octadecadienoyl-CoA + reduced [electron-transfer flavoprotein]</text>
        <dbReference type="Rhea" id="RHEA:47300"/>
        <dbReference type="Rhea" id="RHEA-COMP:10685"/>
        <dbReference type="Rhea" id="RHEA-COMP:10686"/>
        <dbReference type="ChEBI" id="CHEBI:15378"/>
        <dbReference type="ChEBI" id="CHEBI:57387"/>
        <dbReference type="ChEBI" id="CHEBI:57692"/>
        <dbReference type="ChEBI" id="CHEBI:58307"/>
        <dbReference type="ChEBI" id="CHEBI:77553"/>
    </reaction>
    <physiologicalReaction direction="left-to-right" evidence="1">
        <dbReference type="Rhea" id="RHEA:47301"/>
    </physiologicalReaction>
</comment>
<comment type="cofactor">
    <cofactor evidence="1">
        <name>FAD</name>
        <dbReference type="ChEBI" id="CHEBI:57692"/>
    </cofactor>
</comment>
<comment type="pathway">
    <text evidence="6">Lipid metabolism; mitochondrial fatty acid beta-oxidation.</text>
</comment>
<comment type="subunit">
    <text evidence="1">Homotetramer.</text>
</comment>
<comment type="subcellular location">
    <subcellularLocation>
        <location evidence="1">Mitochondrion matrix</location>
    </subcellularLocation>
</comment>
<comment type="tissue specificity">
    <text evidence="6">Expressed in heart, skeletal muscle, kidney, and brain (PubMed:9861014). Expressed in liver (at protein level) (PubMed:9861014).</text>
</comment>
<comment type="PTM">
    <text evidence="5">Acetylation at Lys-318 and Lys-322 in proximity of the cofactor-binding sites strongly reduces catalytic activity. These sites are deacetylated by SIRT3.</text>
</comment>
<comment type="disruption phenotype">
    <text evidence="6">Acadl deficiency results in significant gestational loss of embryos (PubMed:9861014). Homozygous knockout mice that achieve birth display severe fasting intolerance with subsequent hepatic and cardiac lipidosis, hypoglycemia, elevated serum free fatty acids, non-ketotic dicarboxylic aciduria, and myocardial degeneration (PubMed:9861014).</text>
</comment>
<comment type="similarity">
    <text evidence="7">Belongs to the acyl-CoA dehydrogenase family.</text>
</comment>
<sequence length="430" mass="47908">MAARLLLRSLRVLKARSAPRPPPSARCSHSGAEARLETPSAKKLTDVGIRRIFSSEHDIFRESVRKFFQEEVIPHHTEWEKAGEVSREVWEKAGKQGLLGINIAEKHGGIGGDLLSTAVTWEEQAYSNCTGPGFSLHSDIVMPYIANYGTKEQIEKFIPQMTAGKCIGAIAMTEPGAGSDLQGVRTNAKRSGSDWILNGSKVFITNGWLSDLVIVVAVTNREARSPAHGISLFLVENGMKGFIKGRKLHKMGMKAQDTAELFFEDVRLPANALLGEENKGFYYLMQELPQERLLIAELAISACEFMFEETRNYVKQRKAFGKTVAHIQTVQHKLAELKTHICVTRAFVDSCLQLHETKRLDSGSASMAKYWASELQNSVAYECVQLHGGWGYMWEYPIAKAYVDARVQPIYGGTNEIMKELIARQIVSDS</sequence>
<evidence type="ECO:0000250" key="1">
    <source>
        <dbReference type="UniProtKB" id="P15650"/>
    </source>
</evidence>
<evidence type="ECO:0000250" key="2">
    <source>
        <dbReference type="UniProtKB" id="P26440"/>
    </source>
</evidence>
<evidence type="ECO:0000250" key="3">
    <source>
        <dbReference type="UniProtKB" id="P28330"/>
    </source>
</evidence>
<evidence type="ECO:0000256" key="4">
    <source>
        <dbReference type="SAM" id="MobiDB-lite"/>
    </source>
</evidence>
<evidence type="ECO:0000269" key="5">
    <source>
    </source>
</evidence>
<evidence type="ECO:0000269" key="6">
    <source>
    </source>
</evidence>
<evidence type="ECO:0000305" key="7"/>
<evidence type="ECO:0000312" key="8">
    <source>
        <dbReference type="MGI" id="MGI:87866"/>
    </source>
</evidence>
<evidence type="ECO:0007744" key="9">
    <source>
    </source>
</evidence>
<evidence type="ECO:0007744" key="10">
    <source>
    </source>
</evidence>
<evidence type="ECO:0007744" key="11">
    <source>
    </source>
</evidence>
<feature type="transit peptide" description="Mitochondrion" evidence="1">
    <location>
        <begin position="1"/>
        <end position="30"/>
    </location>
</feature>
<feature type="chain" id="PRO_0000000511" description="Long-chain specific acyl-CoA dehydrogenase, mitochondrial">
    <location>
        <begin position="31"/>
        <end position="430"/>
    </location>
</feature>
<feature type="region of interest" description="Disordered" evidence="4">
    <location>
        <begin position="17"/>
        <end position="39"/>
    </location>
</feature>
<feature type="active site" description="Proton acceptor" evidence="2">
    <location>
        <position position="291"/>
    </location>
</feature>
<feature type="binding site" evidence="2">
    <location>
        <begin position="170"/>
        <end position="179"/>
    </location>
    <ligand>
        <name>FAD</name>
        <dbReference type="ChEBI" id="CHEBI:57692"/>
    </ligand>
</feature>
<feature type="binding site" evidence="2">
    <location>
        <position position="179"/>
    </location>
    <ligand>
        <name>substrate</name>
    </ligand>
</feature>
<feature type="binding site" evidence="2">
    <location>
        <begin position="203"/>
        <end position="205"/>
    </location>
    <ligand>
        <name>FAD</name>
        <dbReference type="ChEBI" id="CHEBI:57692"/>
    </ligand>
</feature>
<feature type="binding site" evidence="2">
    <location>
        <begin position="227"/>
        <end position="228"/>
    </location>
    <ligand>
        <name>substrate</name>
    </ligand>
</feature>
<feature type="binding site" evidence="2">
    <location>
        <position position="282"/>
    </location>
    <ligand>
        <name>substrate</name>
    </ligand>
</feature>
<feature type="binding site" evidence="2">
    <location>
        <begin position="289"/>
        <end position="292"/>
    </location>
    <ligand>
        <name>substrate</name>
    </ligand>
</feature>
<feature type="binding site" evidence="2">
    <location>
        <position position="317"/>
    </location>
    <ligand>
        <name>FAD</name>
        <dbReference type="ChEBI" id="CHEBI:57692"/>
    </ligand>
</feature>
<feature type="binding site" evidence="2">
    <location>
        <position position="328"/>
    </location>
    <ligand>
        <name>FAD</name>
        <dbReference type="ChEBI" id="CHEBI:57692"/>
    </ligand>
</feature>
<feature type="binding site" evidence="2">
    <location>
        <begin position="385"/>
        <end position="389"/>
    </location>
    <ligand>
        <name>FAD</name>
        <dbReference type="ChEBI" id="CHEBI:57692"/>
    </ligand>
</feature>
<feature type="binding site" evidence="2">
    <location>
        <begin position="412"/>
        <end position="413"/>
    </location>
    <ligand>
        <name>substrate</name>
    </ligand>
</feature>
<feature type="binding site" evidence="2">
    <location>
        <begin position="414"/>
        <end position="416"/>
    </location>
    <ligand>
        <name>FAD</name>
        <dbReference type="ChEBI" id="CHEBI:57692"/>
    </ligand>
</feature>
<feature type="modified residue" description="N6-acetyllysine" evidence="5 10">
    <location>
        <position position="42"/>
    </location>
</feature>
<feature type="modified residue" description="Phosphoserine" evidence="1">
    <location>
        <position position="54"/>
    </location>
</feature>
<feature type="modified residue" description="Phosphoserine" evidence="9">
    <location>
        <position position="55"/>
    </location>
</feature>
<feature type="modified residue" description="N6-acetyllysine; alternate" evidence="10">
    <location>
        <position position="66"/>
    </location>
</feature>
<feature type="modified residue" description="N6-succinyllysine; alternate" evidence="11">
    <location>
        <position position="66"/>
    </location>
</feature>
<feature type="modified residue" description="N6-acetyllysine; alternate" evidence="10">
    <location>
        <position position="81"/>
    </location>
</feature>
<feature type="modified residue" description="N6-succinyllysine; alternate" evidence="11">
    <location>
        <position position="81"/>
    </location>
</feature>
<feature type="modified residue" description="N6-acetyllysine" evidence="10">
    <location>
        <position position="92"/>
    </location>
</feature>
<feature type="modified residue" description="N6-acetyllysine" evidence="10">
    <location>
        <position position="95"/>
    </location>
</feature>
<feature type="modified residue" description="N6-succinyllysine" evidence="11">
    <location>
        <position position="165"/>
    </location>
</feature>
<feature type="modified residue" description="Phosphoserine" evidence="9">
    <location>
        <position position="191"/>
    </location>
</feature>
<feature type="modified residue" description="N6-succinyllysine" evidence="11">
    <location>
        <position position="240"/>
    </location>
</feature>
<feature type="modified residue" description="N6-acetyllysine; alternate" evidence="10">
    <location>
        <position position="254"/>
    </location>
</feature>
<feature type="modified residue" description="N6-succinyllysine; alternate" evidence="11">
    <location>
        <position position="254"/>
    </location>
</feature>
<feature type="modified residue" description="N6-acetyllysine; alternate" evidence="10">
    <location>
        <position position="279"/>
    </location>
</feature>
<feature type="modified residue" description="N6-succinyllysine; alternate" evidence="11">
    <location>
        <position position="279"/>
    </location>
</feature>
<feature type="modified residue" description="N6-acetyllysine" evidence="5">
    <location>
        <position position="318"/>
    </location>
</feature>
<feature type="modified residue" description="N6-acetyllysine; alternate" evidence="5 10">
    <location>
        <position position="322"/>
    </location>
</feature>
<feature type="modified residue" description="N6-succinyllysine; alternate" evidence="11">
    <location>
        <position position="322"/>
    </location>
</feature>
<feature type="modified residue" description="N6-acetyllysine" evidence="10">
    <location>
        <position position="358"/>
    </location>
</feature>
<feature type="modified residue" description="Phosphoserine" evidence="9">
    <location>
        <position position="362"/>
    </location>
</feature>
<feature type="mutagenesis site" description="Reduces activity by 90% when associated with R-318 and R-322." evidence="5">
    <original>K</original>
    <variation>R</variation>
    <location>
        <position position="42"/>
    </location>
</feature>
<feature type="mutagenesis site" description="Reduces activity by 37%; reduces activity by 80% when associated with R-322." evidence="5">
    <original>K</original>
    <variation>R</variation>
    <location>
        <position position="318"/>
    </location>
</feature>
<feature type="mutagenesis site" description="Reduces activity by 23%; reduces activity by 80% when associated with R-318." evidence="5">
    <original>K</original>
    <variation>R</variation>
    <location>
        <position position="322"/>
    </location>
</feature>
<feature type="sequence conflict" description="In Ref. 1; AAC52329 and 5; AAC23587." evidence="7" ref="1 5">
    <original>KA</original>
    <variation>RP</variation>
    <location>
        <begin position="14"/>
        <end position="15"/>
    </location>
</feature>
<feature type="sequence conflict" description="In Ref. 2; BAB23838." evidence="7" ref="2">
    <original>K</original>
    <variation>S</variation>
    <location>
        <position position="14"/>
    </location>
</feature>
<feature type="sequence conflict" description="In Ref. 1; AAC52329." evidence="7" ref="1">
    <original>PR</original>
    <variation>TL</variation>
    <location>
        <begin position="19"/>
        <end position="20"/>
    </location>
</feature>
<feature type="sequence conflict" description="In Ref. 1; AAC52329 and 2; BAB23838." evidence="7" ref="1 2">
    <original>P</original>
    <variation>L</variation>
    <location>
        <position position="22"/>
    </location>
</feature>
<feature type="sequence conflict" description="In Ref. 1; AAC52329." evidence="7" ref="1">
    <original>A</original>
    <variation>S</variation>
    <location>
        <position position="25"/>
    </location>
</feature>
<feature type="sequence conflict" description="In Ref. 1; AAC52329." evidence="7" ref="1">
    <original>A</original>
    <variation>P</variation>
    <location>
        <position position="32"/>
    </location>
</feature>
<feature type="sequence conflict" description="In Ref. 1; AAC52329." evidence="7" ref="1">
    <original>R</original>
    <variation>G</variation>
    <location>
        <position position="35"/>
    </location>
</feature>
<feature type="sequence conflict" description="In Ref. 1; AAC52329 and 2; BAB23838." evidence="7" ref="1 2">
    <original>V</original>
    <variation>I</variation>
    <location>
        <position position="47"/>
    </location>
</feature>
<feature type="sequence conflict" description="In Ref. 2; BAB31161." evidence="7" ref="2">
    <original>D</original>
    <variation>E</variation>
    <location>
        <position position="58"/>
    </location>
</feature>
<feature type="sequence conflict" description="In Ref. 1; AAC52329." evidence="7" ref="1">
    <original>GP</original>
    <variation>RA</variation>
    <location>
        <begin position="131"/>
        <end position="132"/>
    </location>
</feature>
<feature type="sequence conflict" description="In Ref. 1; AAC52329." evidence="7" ref="1">
    <original>S</original>
    <variation>T</variation>
    <location>
        <position position="135"/>
    </location>
</feature>
<feature type="sequence conflict" description="In Ref. 1; AAC52329." evidence="7" ref="1">
    <original>S</original>
    <variation>W</variation>
    <location>
        <position position="225"/>
    </location>
</feature>
<accession>P51174</accession>
<accession>B2KGC6</accession>
<accession>O35302</accession>
<accession>Q8QZR6</accession>
<accession>Q9CU29</accession>
<accession>Q9DB83</accession>
<name>ACADL_MOUSE</name>
<organism>
    <name type="scientific">Mus musculus</name>
    <name type="common">Mouse</name>
    <dbReference type="NCBI Taxonomy" id="10090"/>
    <lineage>
        <taxon>Eukaryota</taxon>
        <taxon>Metazoa</taxon>
        <taxon>Chordata</taxon>
        <taxon>Craniata</taxon>
        <taxon>Vertebrata</taxon>
        <taxon>Euteleostomi</taxon>
        <taxon>Mammalia</taxon>
        <taxon>Eutheria</taxon>
        <taxon>Euarchontoglires</taxon>
        <taxon>Glires</taxon>
        <taxon>Rodentia</taxon>
        <taxon>Myomorpha</taxon>
        <taxon>Muroidea</taxon>
        <taxon>Muridae</taxon>
        <taxon>Murinae</taxon>
        <taxon>Mus</taxon>
        <taxon>Mus</taxon>
    </lineage>
</organism>
<proteinExistence type="evidence at protein level"/>
<protein>
    <recommendedName>
        <fullName>Long-chain specific acyl-CoA dehydrogenase, mitochondrial</fullName>
        <shortName>LCAD</shortName>
        <ecNumber evidence="6">1.3.8.8</ecNumber>
    </recommendedName>
</protein>